<name>PURQ_PROM9</name>
<reference key="1">
    <citation type="journal article" date="2006" name="Science">
        <title>Genomic islands and the ecology and evolution of Prochlorococcus.</title>
        <authorList>
            <person name="Coleman M.L."/>
            <person name="Sullivan M.B."/>
            <person name="Martiny A.C."/>
            <person name="Steglich C."/>
            <person name="Barry K."/>
            <person name="Delong E.F."/>
            <person name="Chisholm S.W."/>
        </authorList>
    </citation>
    <scope>NUCLEOTIDE SEQUENCE [LARGE SCALE GENOMIC DNA]</scope>
    <source>
        <strain>MIT 9312</strain>
    </source>
</reference>
<evidence type="ECO:0000255" key="1">
    <source>
        <dbReference type="HAMAP-Rule" id="MF_00421"/>
    </source>
</evidence>
<accession>Q31B97</accession>
<proteinExistence type="inferred from homology"/>
<keyword id="KW-0067">ATP-binding</keyword>
<keyword id="KW-0963">Cytoplasm</keyword>
<keyword id="KW-0315">Glutamine amidotransferase</keyword>
<keyword id="KW-0378">Hydrolase</keyword>
<keyword id="KW-0436">Ligase</keyword>
<keyword id="KW-0547">Nucleotide-binding</keyword>
<keyword id="KW-0658">Purine biosynthesis</keyword>
<protein>
    <recommendedName>
        <fullName evidence="1">Phosphoribosylformylglycinamidine synthase subunit PurQ</fullName>
        <shortName evidence="1">FGAM synthase</shortName>
        <ecNumber evidence="1">6.3.5.3</ecNumber>
    </recommendedName>
    <alternativeName>
        <fullName evidence="1">Formylglycinamide ribonucleotide amidotransferase subunit I</fullName>
        <shortName evidence="1">FGAR amidotransferase I</shortName>
        <shortName evidence="1">FGAR-AT I</shortName>
    </alternativeName>
    <alternativeName>
        <fullName evidence="1">Glutaminase PurQ</fullName>
        <ecNumber evidence="1">3.5.1.2</ecNumber>
    </alternativeName>
    <alternativeName>
        <fullName evidence="1">Phosphoribosylformylglycinamidine synthase subunit I</fullName>
    </alternativeName>
</protein>
<gene>
    <name evidence="1" type="primary">purQ</name>
    <name type="ordered locus">PMT9312_0788</name>
</gene>
<dbReference type="EC" id="6.3.5.3" evidence="1"/>
<dbReference type="EC" id="3.5.1.2" evidence="1"/>
<dbReference type="EMBL" id="CP000111">
    <property type="protein sequence ID" value="ABB49848.1"/>
    <property type="molecule type" value="Genomic_DNA"/>
</dbReference>
<dbReference type="RefSeq" id="WP_011376343.1">
    <property type="nucleotide sequence ID" value="NC_007577.1"/>
</dbReference>
<dbReference type="SMR" id="Q31B97"/>
<dbReference type="STRING" id="74546.PMT9312_0788"/>
<dbReference type="KEGG" id="pmi:PMT9312_0788"/>
<dbReference type="eggNOG" id="COG0047">
    <property type="taxonomic scope" value="Bacteria"/>
</dbReference>
<dbReference type="HOGENOM" id="CLU_001031_3_1_3"/>
<dbReference type="OrthoDB" id="9804441at2"/>
<dbReference type="UniPathway" id="UPA00074">
    <property type="reaction ID" value="UER00128"/>
</dbReference>
<dbReference type="Proteomes" id="UP000002715">
    <property type="component" value="Chromosome"/>
</dbReference>
<dbReference type="GO" id="GO:0005737">
    <property type="term" value="C:cytoplasm"/>
    <property type="evidence" value="ECO:0007669"/>
    <property type="project" value="UniProtKB-SubCell"/>
</dbReference>
<dbReference type="GO" id="GO:0005524">
    <property type="term" value="F:ATP binding"/>
    <property type="evidence" value="ECO:0007669"/>
    <property type="project" value="UniProtKB-KW"/>
</dbReference>
<dbReference type="GO" id="GO:0004359">
    <property type="term" value="F:glutaminase activity"/>
    <property type="evidence" value="ECO:0007669"/>
    <property type="project" value="UniProtKB-EC"/>
</dbReference>
<dbReference type="GO" id="GO:0004642">
    <property type="term" value="F:phosphoribosylformylglycinamidine synthase activity"/>
    <property type="evidence" value="ECO:0007669"/>
    <property type="project" value="UniProtKB-UniRule"/>
</dbReference>
<dbReference type="GO" id="GO:0006189">
    <property type="term" value="P:'de novo' IMP biosynthetic process"/>
    <property type="evidence" value="ECO:0007669"/>
    <property type="project" value="UniProtKB-UniRule"/>
</dbReference>
<dbReference type="CDD" id="cd01740">
    <property type="entry name" value="GATase1_FGAR_AT"/>
    <property type="match status" value="1"/>
</dbReference>
<dbReference type="Gene3D" id="3.40.50.880">
    <property type="match status" value="1"/>
</dbReference>
<dbReference type="HAMAP" id="MF_00421">
    <property type="entry name" value="PurQ"/>
    <property type="match status" value="1"/>
</dbReference>
<dbReference type="InterPro" id="IPR029062">
    <property type="entry name" value="Class_I_gatase-like"/>
</dbReference>
<dbReference type="InterPro" id="IPR010075">
    <property type="entry name" value="PRibForGlyAmidine_synth_PurQ"/>
</dbReference>
<dbReference type="NCBIfam" id="TIGR01737">
    <property type="entry name" value="FGAM_synth_I"/>
    <property type="match status" value="1"/>
</dbReference>
<dbReference type="NCBIfam" id="NF002957">
    <property type="entry name" value="PRK03619.1"/>
    <property type="match status" value="1"/>
</dbReference>
<dbReference type="PANTHER" id="PTHR47552">
    <property type="entry name" value="PHOSPHORIBOSYLFORMYLGLYCINAMIDINE SYNTHASE SUBUNIT PURQ"/>
    <property type="match status" value="1"/>
</dbReference>
<dbReference type="PANTHER" id="PTHR47552:SF1">
    <property type="entry name" value="PHOSPHORIBOSYLFORMYLGLYCINAMIDINE SYNTHASE SUBUNIT PURQ"/>
    <property type="match status" value="1"/>
</dbReference>
<dbReference type="Pfam" id="PF13507">
    <property type="entry name" value="GATase_5"/>
    <property type="match status" value="1"/>
</dbReference>
<dbReference type="PIRSF" id="PIRSF001586">
    <property type="entry name" value="FGAM_synth_I"/>
    <property type="match status" value="1"/>
</dbReference>
<dbReference type="SMART" id="SM01211">
    <property type="entry name" value="GATase_5"/>
    <property type="match status" value="1"/>
</dbReference>
<dbReference type="SUPFAM" id="SSF52317">
    <property type="entry name" value="Class I glutamine amidotransferase-like"/>
    <property type="match status" value="1"/>
</dbReference>
<dbReference type="PROSITE" id="PS51273">
    <property type="entry name" value="GATASE_TYPE_1"/>
    <property type="match status" value="1"/>
</dbReference>
<organism>
    <name type="scientific">Prochlorococcus marinus (strain MIT 9312)</name>
    <dbReference type="NCBI Taxonomy" id="74546"/>
    <lineage>
        <taxon>Bacteria</taxon>
        <taxon>Bacillati</taxon>
        <taxon>Cyanobacteriota</taxon>
        <taxon>Cyanophyceae</taxon>
        <taxon>Synechococcales</taxon>
        <taxon>Prochlorococcaceae</taxon>
        <taxon>Prochlorococcus</taxon>
    </lineage>
</organism>
<comment type="function">
    <text evidence="1">Part of the phosphoribosylformylglycinamidine synthase complex involved in the purines biosynthetic pathway. Catalyzes the ATP-dependent conversion of formylglycinamide ribonucleotide (FGAR) and glutamine to yield formylglycinamidine ribonucleotide (FGAM) and glutamate. The FGAM synthase complex is composed of three subunits. PurQ produces an ammonia molecule by converting glutamine to glutamate. PurL transfers the ammonia molecule to FGAR to form FGAM in an ATP-dependent manner. PurS interacts with PurQ and PurL and is thought to assist in the transfer of the ammonia molecule from PurQ to PurL.</text>
</comment>
<comment type="catalytic activity">
    <reaction evidence="1">
        <text>N(2)-formyl-N(1)-(5-phospho-beta-D-ribosyl)glycinamide + L-glutamine + ATP + H2O = 2-formamido-N(1)-(5-O-phospho-beta-D-ribosyl)acetamidine + L-glutamate + ADP + phosphate + H(+)</text>
        <dbReference type="Rhea" id="RHEA:17129"/>
        <dbReference type="ChEBI" id="CHEBI:15377"/>
        <dbReference type="ChEBI" id="CHEBI:15378"/>
        <dbReference type="ChEBI" id="CHEBI:29985"/>
        <dbReference type="ChEBI" id="CHEBI:30616"/>
        <dbReference type="ChEBI" id="CHEBI:43474"/>
        <dbReference type="ChEBI" id="CHEBI:58359"/>
        <dbReference type="ChEBI" id="CHEBI:147286"/>
        <dbReference type="ChEBI" id="CHEBI:147287"/>
        <dbReference type="ChEBI" id="CHEBI:456216"/>
        <dbReference type="EC" id="6.3.5.3"/>
    </reaction>
</comment>
<comment type="catalytic activity">
    <reaction evidence="1">
        <text>L-glutamine + H2O = L-glutamate + NH4(+)</text>
        <dbReference type="Rhea" id="RHEA:15889"/>
        <dbReference type="ChEBI" id="CHEBI:15377"/>
        <dbReference type="ChEBI" id="CHEBI:28938"/>
        <dbReference type="ChEBI" id="CHEBI:29985"/>
        <dbReference type="ChEBI" id="CHEBI:58359"/>
        <dbReference type="EC" id="3.5.1.2"/>
    </reaction>
</comment>
<comment type="pathway">
    <text evidence="1">Purine metabolism; IMP biosynthesis via de novo pathway; 5-amino-1-(5-phospho-D-ribosyl)imidazole from N(2)-formyl-N(1)-(5-phospho-D-ribosyl)glycinamide: step 1/2.</text>
</comment>
<comment type="subunit">
    <text evidence="1">Part of the FGAM synthase complex composed of 1 PurL, 1 PurQ and 2 PurS subunits.</text>
</comment>
<comment type="subcellular location">
    <subcellularLocation>
        <location evidence="1">Cytoplasm</location>
    </subcellularLocation>
</comment>
<sequence>MDNFTVGVVVFPGSNCDRDVSWALEGCLDIRTKYLWHESSDLSDVDAIVLPGGFSYGDYLRCGAIARFSPLINALDEFVKSGKRVLGICNGFQILTESGFLPGALVANKNLNFICDDVELDIVSTKGGWFNNGDEKQTIKLPIAHGEGRYHCDSDTLKKLVDNELIALRYKNNPNGSSFDIAGITNEKGNVLGLMPHPERACDETIGGTDGLFTLKSLILK</sequence>
<feature type="chain" id="PRO_0000252718" description="Phosphoribosylformylglycinamidine synthase subunit PurQ">
    <location>
        <begin position="1"/>
        <end position="221"/>
    </location>
</feature>
<feature type="domain" description="Glutamine amidotransferase type-1" evidence="1">
    <location>
        <begin position="6"/>
        <end position="221"/>
    </location>
</feature>
<feature type="active site" description="Nucleophile" evidence="1">
    <location>
        <position position="89"/>
    </location>
</feature>
<feature type="active site" evidence="1">
    <location>
        <position position="197"/>
    </location>
</feature>
<feature type="active site" evidence="1">
    <location>
        <position position="199"/>
    </location>
</feature>